<organism>
    <name type="scientific">Pyricularia grisea</name>
    <name type="common">Crabgrass-specific blast fungus</name>
    <name type="synonym">Magnaporthe grisea</name>
    <dbReference type="NCBI Taxonomy" id="148305"/>
    <lineage>
        <taxon>Eukaryota</taxon>
        <taxon>Fungi</taxon>
        <taxon>Dikarya</taxon>
        <taxon>Ascomycota</taxon>
        <taxon>Pezizomycotina</taxon>
        <taxon>Sordariomycetes</taxon>
        <taxon>Sordariomycetidae</taxon>
        <taxon>Magnaporthales</taxon>
        <taxon>Pyriculariaceae</taxon>
        <taxon>Pyricularia</taxon>
    </lineage>
</organism>
<evidence type="ECO:0000255" key="1">
    <source>
        <dbReference type="PROSITE-ProRule" id="PRU01020"/>
    </source>
</evidence>
<evidence type="ECO:0000256" key="2">
    <source>
        <dbReference type="SAM" id="MobiDB-lite"/>
    </source>
</evidence>
<evidence type="ECO:0000269" key="3">
    <source>
    </source>
</evidence>
<evidence type="ECO:0000269" key="4">
    <source>
    </source>
</evidence>
<evidence type="ECO:0000303" key="5">
    <source>
    </source>
</evidence>
<evidence type="ECO:0000305" key="6">
    <source>
    </source>
</evidence>
<evidence type="ECO:0000305" key="7">
    <source>
    </source>
</evidence>
<name>PYIA_PYRGI</name>
<sequence>MASQDGTTELLSQSVNSTCIPGSTYHVDRGRASSASTPPTSPPLSEVDYTPLLESTQEPRHEYTQLAHSLVKAMADYVGHLQEENLPMPSLEPAAQVHGGLKVQGGVAARDTVVKLAQKIVAMTMDPEMKLFISSLQFHFCSSLKVAIDLRVHELDECFRASSRQADALALARYREPHEADTLGFGLAFNTTANFWEVLARDTEGKRSQRFNRAMRAVNINALEVIPRIYPFNRIGGNGLLVDVGGGLGQVARAIMATNQGSRLQRCIVQDVCAADDVLEEVLESNRKLGVELQRHDFFDKQPVTGASIYFFRHIFHDWPDRACVKILKQIVQAMGRDSRLLICDQVVDDEPSIPATLYDIDMWTLFGGKERNRSEWEALFRAADERLYIKKVWTTTEAPTTILEVCLW</sequence>
<comment type="function">
    <text evidence="3 4 7">O-methyltransferase; part of the gene cluster that mediates the biosynthesis of the mycotoxin pyrichalasin H, a tyrosine-derived cytochalasan that inhibits the growth of rice seedlings, but also inhibits lymphocyte capping and actin polymerization and alters cell morphology (Probable) (PubMed:31099577). Pyrichalasin H is indicated as the responsible agent for the genus-specific pathogenicity of M.grisea toward crabgrass (PubMed:31099577). The first step in the pathway is catalyzed by the O-methyltransferase pyiA which methylates free tyrosine to generate the precursor O-methyltyrosine (PubMed:31099577). The hybrid PKS-NRPS pyiS, assisted by the enoyl reductase pyiC, are responsible for fusion of the O-methyltyrosine precursor and the polyketide backbone (PubMed:31099577). The polyketide synthase module (PKS) of pyiS is responsible for the synthesis of the polyketide backbone and the downstream nonribosomal peptide synthetase (NRPS) amidates the carboxyl end of the polyketide with the O-methyltyrosine precursor (PubMed:31099577). As the NRPS A-domain demonstrates substrate tolerance, pyiS can also use phenylalanine, tyrosine and even para-chlorophenylalanine as amino acid precursor, which leads to the production of novel cytochalasans, including halogenated cytochalasans (PubMed:31099577). Because pyiS lacks a designated enoylreductase (ER) domain, the required activity is provided the enoyl reductase pyiC (PubMed:31099577). Reduction by the hydrolyase pyiE leads to 1,5-dihydropyrrolone, which is substrate for dehydration and intra-molecular Diels-Alder cyclization by the Diels-Alderase pyiF to yield the required isoindolone-fused macrocycle (PubMed:32039410). The tailoring cytochrome P450 monooxygenases piyD and piyG catalyze the hydroxylation at C-18 and C-7, respectivily, whereas the short-chain dehydrogenase/reductase pyiH reduces the carbonyl at C-21 in preparation for the transfer of an acetyl group by the acetyltransferase pyiB (PubMed:31099577). These 3 reactions whose order is not clear yet, lead to the production of O-methylpyrichalasin J, a deacetylated pyrichalasin H (PubMed:31099577). Finally, pyiB to converts O-methylpyrichalasin J into the final product pyrichalasin H via acetylation of C-21 (PubMed:31099577).</text>
</comment>
<comment type="pathway">
    <text evidence="3">Mycotoxin biosynthesis.</text>
</comment>
<comment type="disruption phenotype">
    <text evidence="3">Leads to the loss of pyrichalasin H production, but accumulates the tyrosine and phenylalanine analogs of pyrichalasin H, called magnachalasin H and cytochalasin H.</text>
</comment>
<comment type="similarity">
    <text evidence="1">Belongs to the class I-like SAM-binding methyltransferase superfamily. Cation-independent O-methyltransferase family.</text>
</comment>
<keyword id="KW-0489">Methyltransferase</keyword>
<keyword id="KW-1185">Reference proteome</keyword>
<keyword id="KW-0949">S-adenosyl-L-methionine</keyword>
<keyword id="KW-0808">Transferase</keyword>
<protein>
    <recommendedName>
        <fullName evidence="5">O-methyltransferase pyiA</fullName>
        <ecNumber evidence="6">2.1.1.-</ecNumber>
    </recommendedName>
    <alternativeName>
        <fullName evidence="5">Pyrichalasin H biosynthesis cluster protein A</fullName>
    </alternativeName>
</protein>
<dbReference type="EC" id="2.1.1.-" evidence="6"/>
<dbReference type="EMBL" id="MK801691">
    <property type="protein sequence ID" value="QCS37511.1"/>
    <property type="molecule type" value="Genomic_DNA"/>
</dbReference>
<dbReference type="SMR" id="A0A4P8WAD3"/>
<dbReference type="Proteomes" id="UP000515153">
    <property type="component" value="Unplaced"/>
</dbReference>
<dbReference type="GO" id="GO:0008171">
    <property type="term" value="F:O-methyltransferase activity"/>
    <property type="evidence" value="ECO:0007669"/>
    <property type="project" value="InterPro"/>
</dbReference>
<dbReference type="GO" id="GO:0032259">
    <property type="term" value="P:methylation"/>
    <property type="evidence" value="ECO:0007669"/>
    <property type="project" value="UniProtKB-KW"/>
</dbReference>
<dbReference type="GO" id="GO:0044550">
    <property type="term" value="P:secondary metabolite biosynthetic process"/>
    <property type="evidence" value="ECO:0007669"/>
    <property type="project" value="UniProtKB-ARBA"/>
</dbReference>
<dbReference type="Gene3D" id="3.40.50.150">
    <property type="entry name" value="Vaccinia Virus protein VP39"/>
    <property type="match status" value="1"/>
</dbReference>
<dbReference type="InterPro" id="IPR016461">
    <property type="entry name" value="COMT-like"/>
</dbReference>
<dbReference type="InterPro" id="IPR001077">
    <property type="entry name" value="O_MeTrfase_dom"/>
</dbReference>
<dbReference type="InterPro" id="IPR029063">
    <property type="entry name" value="SAM-dependent_MTases_sf"/>
</dbReference>
<dbReference type="PANTHER" id="PTHR43712:SF5">
    <property type="entry name" value="O-METHYLTRANSFERASE ASQN-RELATED"/>
    <property type="match status" value="1"/>
</dbReference>
<dbReference type="PANTHER" id="PTHR43712">
    <property type="entry name" value="PUTATIVE (AFU_ORTHOLOGUE AFUA_4G14580)-RELATED"/>
    <property type="match status" value="1"/>
</dbReference>
<dbReference type="Pfam" id="PF00891">
    <property type="entry name" value="Methyltransf_2"/>
    <property type="match status" value="1"/>
</dbReference>
<dbReference type="SUPFAM" id="SSF53335">
    <property type="entry name" value="S-adenosyl-L-methionine-dependent methyltransferases"/>
    <property type="match status" value="1"/>
</dbReference>
<dbReference type="PROSITE" id="PS51683">
    <property type="entry name" value="SAM_OMT_II"/>
    <property type="match status" value="1"/>
</dbReference>
<accession>A0A4P8WAD3</accession>
<gene>
    <name evidence="5" type="primary">pyiA</name>
</gene>
<proteinExistence type="inferred from homology"/>
<feature type="chain" id="PRO_0000449451" description="O-methyltransferase pyiA">
    <location>
        <begin position="1"/>
        <end position="409"/>
    </location>
</feature>
<feature type="region of interest" description="Disordered" evidence="2">
    <location>
        <begin position="1"/>
        <end position="46"/>
    </location>
</feature>
<feature type="compositionally biased region" description="Polar residues" evidence="2">
    <location>
        <begin position="1"/>
        <end position="21"/>
    </location>
</feature>
<feature type="active site" description="Proton acceptor" evidence="1">
    <location>
        <position position="317"/>
    </location>
</feature>
<feature type="binding site" evidence="1">
    <location>
        <position position="271"/>
    </location>
    <ligand>
        <name>S-adenosyl-L-methionine</name>
        <dbReference type="ChEBI" id="CHEBI:59789"/>
    </ligand>
</feature>
<reference key="1">
    <citation type="journal article" date="2019" name="Org. Lett.">
        <title>Targeted gene inactivations expose silent cytochalasans in Magnaporthe grisea NI980.</title>
        <authorList>
            <person name="Wang C."/>
            <person name="Hantke V."/>
            <person name="Cox R.J."/>
            <person name="Skellam E."/>
        </authorList>
    </citation>
    <scope>NUCLEOTIDE SEQUENCE [GENOMIC DNA]</scope>
    <scope>FUNCTION</scope>
    <scope>DISRUPTION PHENOTYPE</scope>
    <scope>PATHWAY</scope>
    <source>
        <strain>NI980</strain>
    </source>
</reference>
<reference key="2">
    <citation type="journal article" date="2019" name="Org. Lett.">
        <title>Investigating the function of cryptic cytochalasan cytochrome P450 monooxygenases using combinatorial biosynthesis.</title>
        <authorList>
            <person name="Wang C."/>
            <person name="Becker K."/>
            <person name="Pfuetze S."/>
            <person name="Kuhnert E."/>
            <person name="Stadler M."/>
            <person name="Cox R.J."/>
            <person name="Skellam E."/>
        </authorList>
    </citation>
    <scope>FUNCTION</scope>
</reference>
<reference key="3">
    <citation type="journal article" date="2020" name="Chem. Commun. (Camb.)">
        <title>Evidence for enzyme catalysed intramolecular [4+2] Diels-Alder cyclization during the biosynthesis of pyrichalasin H.</title>
        <authorList>
            <person name="Hantke V."/>
            <person name="Skellam E.J."/>
            <person name="Cox R.J."/>
        </authorList>
    </citation>
    <scope>FUNCTION</scope>
</reference>